<feature type="signal peptide" evidence="1">
    <location>
        <begin position="1"/>
        <end position="19"/>
    </location>
</feature>
<feature type="chain" id="PRO_5002963029" description="Outer membrane lipoprotein BBA14" evidence="1">
    <location>
        <begin position="20"/>
        <end position="121"/>
    </location>
</feature>
<feature type="lipid moiety-binding region" description="N-palmitoyl cysteine" evidence="1">
    <location>
        <position position="20"/>
    </location>
</feature>
<feature type="lipid moiety-binding region" description="S-diacylglycerol cysteine" evidence="1">
    <location>
        <position position="20"/>
    </location>
</feature>
<feature type="helix" evidence="6">
    <location>
        <begin position="38"/>
        <end position="65"/>
    </location>
</feature>
<feature type="helix" evidence="6">
    <location>
        <begin position="79"/>
        <end position="81"/>
    </location>
</feature>
<feature type="helix" evidence="6">
    <location>
        <begin position="88"/>
        <end position="116"/>
    </location>
</feature>
<proteinExistence type="evidence at protein level"/>
<organism>
    <name type="scientific">Borreliella burgdorferi (strain ATCC 35210 / DSM 4680 / CIP 102532 / B31)</name>
    <name type="common">Borrelia burgdorferi</name>
    <dbReference type="NCBI Taxonomy" id="224326"/>
    <lineage>
        <taxon>Bacteria</taxon>
        <taxon>Pseudomonadati</taxon>
        <taxon>Spirochaetota</taxon>
        <taxon>Spirochaetia</taxon>
        <taxon>Spirochaetales</taxon>
        <taxon>Borreliaceae</taxon>
        <taxon>Borreliella</taxon>
    </lineage>
</organism>
<evidence type="ECO:0000255" key="1">
    <source>
        <dbReference type="PROSITE-ProRule" id="PRU00303"/>
    </source>
</evidence>
<evidence type="ECO:0000269" key="2">
    <source>
    </source>
</evidence>
<evidence type="ECO:0000269" key="3">
    <source>
    </source>
</evidence>
<evidence type="ECO:0000303" key="4">
    <source>
    </source>
</evidence>
<evidence type="ECO:0000305" key="5">
    <source>
    </source>
</evidence>
<evidence type="ECO:0007829" key="6">
    <source>
        <dbReference type="PDB" id="7ZJC"/>
    </source>
</evidence>
<name>LIP14_BORBU</name>
<dbReference type="EMBL" id="AE000790">
    <property type="status" value="NOT_ANNOTATED_CDS"/>
    <property type="molecule type" value="Genomic_DNA"/>
</dbReference>
<dbReference type="RefSeq" id="WP_010258119.1">
    <property type="nucleotide sequence ID" value="NC_001857.2"/>
</dbReference>
<dbReference type="PDB" id="7QDV">
    <property type="method" value="X-ray"/>
    <property type="resolution" value="1.90 A"/>
    <property type="chains" value="A=26-121"/>
</dbReference>
<dbReference type="PDB" id="7ZJC">
    <property type="method" value="X-ray"/>
    <property type="resolution" value="1.60 A"/>
    <property type="chains" value="A=25-121"/>
</dbReference>
<dbReference type="PDBsum" id="7QDV"/>
<dbReference type="PDBsum" id="7ZJC"/>
<dbReference type="SMR" id="P0DV83"/>
<dbReference type="OrthoDB" id="351055at2"/>
<dbReference type="Proteomes" id="UP000001807">
    <property type="component" value="Plasmid lp54"/>
</dbReference>
<dbReference type="GO" id="GO:0009279">
    <property type="term" value="C:cell outer membrane"/>
    <property type="evidence" value="ECO:0007669"/>
    <property type="project" value="UniProtKB-SubCell"/>
</dbReference>
<dbReference type="InterPro" id="IPR004248">
    <property type="entry name" value="Borrelia_plasmid_OrfD"/>
</dbReference>
<dbReference type="Pfam" id="PF02999">
    <property type="entry name" value="Borrelia_orfD"/>
    <property type="match status" value="1"/>
</dbReference>
<dbReference type="PROSITE" id="PS51257">
    <property type="entry name" value="PROKAR_LIPOPROTEIN"/>
    <property type="match status" value="1"/>
</dbReference>
<keyword id="KW-0002">3D-structure</keyword>
<keyword id="KW-0998">Cell outer membrane</keyword>
<keyword id="KW-0449">Lipoprotein</keyword>
<keyword id="KW-0472">Membrane</keyword>
<keyword id="KW-0564">Palmitate</keyword>
<keyword id="KW-0614">Plasmid</keyword>
<keyword id="KW-1185">Reference proteome</keyword>
<keyword id="KW-0732">Signal</keyword>
<protein>
    <recommendedName>
        <fullName evidence="4 5">Outer membrane lipoprotein BBA14</fullName>
    </recommendedName>
</protein>
<geneLocation type="plasmid">
    <name>lp54</name>
</geneLocation>
<sequence>MQIKNFPFLFLLNSLIIFSCSTIASLPEEPSSPQESTLKALSLYEAHLSSYIMYLQTFLVKTKQKVNNKNYPEFTLFDTSKLKKDQTLKSIKTNIAALKNHIDKIKPIAMQIYKKYSKNIP</sequence>
<accession>P0DV83</accession>
<comment type="function">
    <text evidence="4">Outer membrane lipoprotein that could act as a component of a potential toxin-antitoxin system in B.burgdorferi which could serve as a plasmid stabilization mechanism in a growing bacterial population.</text>
</comment>
<comment type="subcellular location">
    <subcellularLocation>
        <location evidence="1 3">Cell outer membrane</location>
        <topology evidence="1 3">Lipid-anchor</topology>
        <orientation evidence="3">Extracellular side</orientation>
    </subcellularLocation>
</comment>
<comment type="miscellaneous">
    <text evidence="2">Is a highly immunogenic protein recognized by sera from Lyme disease patients.</text>
</comment>
<reference key="1">
    <citation type="journal article" date="1997" name="Nature">
        <title>Genomic sequence of a Lyme disease spirochaete, Borrelia burgdorferi.</title>
        <authorList>
            <person name="Fraser C.M."/>
            <person name="Casjens S."/>
            <person name="Huang W.M."/>
            <person name="Sutton G.G."/>
            <person name="Clayton R.A."/>
            <person name="Lathigra R."/>
            <person name="White O."/>
            <person name="Ketchum K.A."/>
            <person name="Dodson R.J."/>
            <person name="Hickey E.K."/>
            <person name="Gwinn M.L."/>
            <person name="Dougherty B.A."/>
            <person name="Tomb J.-F."/>
            <person name="Fleischmann R.D."/>
            <person name="Richardson D.L."/>
            <person name="Peterson J.D."/>
            <person name="Kerlavage A.R."/>
            <person name="Quackenbush J."/>
            <person name="Salzberg S.L."/>
            <person name="Hanson M."/>
            <person name="van Vugt R."/>
            <person name="Palmer N."/>
            <person name="Adams M.D."/>
            <person name="Gocayne J.D."/>
            <person name="Weidman J.F."/>
            <person name="Utterback T.R."/>
            <person name="Watthey L."/>
            <person name="McDonald L.A."/>
            <person name="Artiach P."/>
            <person name="Bowman C."/>
            <person name="Garland S.A."/>
            <person name="Fujii C."/>
            <person name="Cotton M.D."/>
            <person name="Horst K."/>
            <person name="Roberts K.M."/>
            <person name="Hatch B."/>
            <person name="Smith H.O."/>
            <person name="Venter J.C."/>
        </authorList>
    </citation>
    <scope>NUCLEOTIDE SEQUENCE [LARGE SCALE GENOMIC DNA]</scope>
    <source>
        <strain>ATCC 35210 / DSM 4680 / CIP 102532 / B31</strain>
    </source>
</reference>
<reference key="2">
    <citation type="journal article" date="2008" name="Microb. Pathog.">
        <title>Profiling the humoral immune response to Borrelia burgdorferi infection with protein microarrays.</title>
        <authorList>
            <person name="Xu Y."/>
            <person name="Bruno J.F."/>
            <person name="Luft B.J."/>
        </authorList>
    </citation>
    <scope>IMMUNOGENICITY</scope>
    <source>
        <strain>ATCC 35210 / DSM 4680 / CIP 102532 / B31</strain>
    </source>
</reference>
<reference key="3">
    <citation type="journal article" date="2017" name="J. Bacteriol.">
        <title>Comprehensive Spatial Analysis of the Borrelia burgdorferi Lipoproteome Reveals a Compartmentalization Bias toward the Bacterial Surface.</title>
        <authorList>
            <person name="Dowdell A.S."/>
            <person name="Murphy M.D."/>
            <person name="Azodi C."/>
            <person name="Swanson S.K."/>
            <person name="Florens L."/>
            <person name="Chen S."/>
            <person name="Zueckert W.R."/>
        </authorList>
    </citation>
    <scope>SUBCELLULAR LOCATION</scope>
    <scope>IDENTIFICATION BY MASS SPECTROMETRY</scope>
    <source>
        <strain>ATCC 35210 / DSM 4680 / CIP 102532 / B31</strain>
    </source>
</reference>
<reference key="4">
    <citation type="journal article" date="2022" name="Pathogens">
        <title>Structural Analysis of the Outer Membrane Lipoprotein BBA14 (OrfD) and the Corresponding Paralogous Gene Family 143 (PFam143) from Borrelia burgdorferi.</title>
        <authorList>
            <person name="Akopjana I."/>
            <person name="Brangulis K."/>
        </authorList>
    </citation>
    <scope>X-RAY CRYSTALLOGRAPHY (1.9 ANGSTROMS) OF 26-121</scope>
    <scope>PUTATIVE FUNCTION</scope>
    <source>
        <strain>ATCC 35210 / DSM 4680 / CIP 102532 / B31</strain>
    </source>
</reference>
<gene>
    <name type="ordered locus">BB_A14</name>
    <name type="ORF">BB_RS05175</name>
</gene>